<reference key="1">
    <citation type="journal article" date="1996" name="DNA Res.">
        <title>A 570-kb DNA sequence of the Escherichia coli K-12 genome corresponding to the 28.0-40.1 min region on the linkage map.</title>
        <authorList>
            <person name="Aiba H."/>
            <person name="Baba T."/>
            <person name="Fujita K."/>
            <person name="Hayashi K."/>
            <person name="Inada T."/>
            <person name="Isono K."/>
            <person name="Itoh T."/>
            <person name="Kasai H."/>
            <person name="Kashimoto K."/>
            <person name="Kimura S."/>
            <person name="Kitakawa M."/>
            <person name="Kitagawa M."/>
            <person name="Makino K."/>
            <person name="Miki T."/>
            <person name="Mizobuchi K."/>
            <person name="Mori H."/>
            <person name="Mori T."/>
            <person name="Motomura K."/>
            <person name="Nakade S."/>
            <person name="Nakamura Y."/>
            <person name="Nashimoto H."/>
            <person name="Nishio Y."/>
            <person name="Oshima T."/>
            <person name="Saito N."/>
            <person name="Sampei G."/>
            <person name="Seki Y."/>
            <person name="Sivasundaram S."/>
            <person name="Tagami H."/>
            <person name="Takeda J."/>
            <person name="Takemoto K."/>
            <person name="Takeuchi Y."/>
            <person name="Wada C."/>
            <person name="Yamamoto Y."/>
            <person name="Horiuchi T."/>
        </authorList>
    </citation>
    <scope>NUCLEOTIDE SEQUENCE [LARGE SCALE GENOMIC DNA]</scope>
    <source>
        <strain>K12 / W3110 / ATCC 27325 / DSM 5911</strain>
    </source>
</reference>
<reference key="2">
    <citation type="journal article" date="1997" name="Science">
        <title>The complete genome sequence of Escherichia coli K-12.</title>
        <authorList>
            <person name="Blattner F.R."/>
            <person name="Plunkett G. III"/>
            <person name="Bloch C.A."/>
            <person name="Perna N.T."/>
            <person name="Burland V."/>
            <person name="Riley M."/>
            <person name="Collado-Vides J."/>
            <person name="Glasner J.D."/>
            <person name="Rode C.K."/>
            <person name="Mayhew G.F."/>
            <person name="Gregor J."/>
            <person name="Davis N.W."/>
            <person name="Kirkpatrick H.A."/>
            <person name="Goeden M.A."/>
            <person name="Rose D.J."/>
            <person name="Mau B."/>
            <person name="Shao Y."/>
        </authorList>
    </citation>
    <scope>NUCLEOTIDE SEQUENCE [LARGE SCALE GENOMIC DNA]</scope>
    <source>
        <strain>K12 / MG1655 / ATCC 47076</strain>
    </source>
</reference>
<reference key="3">
    <citation type="journal article" date="2006" name="Mol. Syst. Biol.">
        <title>Highly accurate genome sequences of Escherichia coli K-12 strains MG1655 and W3110.</title>
        <authorList>
            <person name="Hayashi K."/>
            <person name="Morooka N."/>
            <person name="Yamamoto Y."/>
            <person name="Fujita K."/>
            <person name="Isono K."/>
            <person name="Choi S."/>
            <person name="Ohtsubo E."/>
            <person name="Baba T."/>
            <person name="Wanner B.L."/>
            <person name="Mori H."/>
            <person name="Horiuchi T."/>
        </authorList>
    </citation>
    <scope>NUCLEOTIDE SEQUENCE [LARGE SCALE GENOMIC DNA]</scope>
    <source>
        <strain>K12 / W3110 / ATCC 27325 / DSM 5911</strain>
    </source>
</reference>
<dbReference type="EMBL" id="U00096">
    <property type="protein sequence ID" value="AAC74845.1"/>
    <property type="molecule type" value="Genomic_DNA"/>
</dbReference>
<dbReference type="EMBL" id="AP009048">
    <property type="protein sequence ID" value="BAA15573.2"/>
    <property type="molecule type" value="Genomic_DNA"/>
</dbReference>
<dbReference type="PIR" id="G64937">
    <property type="entry name" value="G64937"/>
</dbReference>
<dbReference type="RefSeq" id="NP_416289.1">
    <property type="nucleotide sequence ID" value="NC_000913.3"/>
</dbReference>
<dbReference type="RefSeq" id="WP_000435292.1">
    <property type="nucleotide sequence ID" value="NZ_SSZK01000001.1"/>
</dbReference>
<dbReference type="SMR" id="P76230"/>
<dbReference type="BioGRID" id="4259415">
    <property type="interactions" value="108"/>
</dbReference>
<dbReference type="FunCoup" id="P76230">
    <property type="interactions" value="163"/>
</dbReference>
<dbReference type="STRING" id="511145.b1775"/>
<dbReference type="TCDB" id="2.A.1.1.115">
    <property type="family name" value="the major facilitator superfamily (mfs)"/>
</dbReference>
<dbReference type="PaxDb" id="511145-b1775"/>
<dbReference type="EnsemblBacteria" id="AAC74845">
    <property type="protein sequence ID" value="AAC74845"/>
    <property type="gene ID" value="b1775"/>
</dbReference>
<dbReference type="GeneID" id="946293"/>
<dbReference type="KEGG" id="ecj:JW5290"/>
<dbReference type="KEGG" id="eco:b1775"/>
<dbReference type="KEGG" id="ecoc:C3026_10130"/>
<dbReference type="PATRIC" id="fig|1411691.4.peg.479"/>
<dbReference type="EchoBASE" id="EB3260"/>
<dbReference type="eggNOG" id="COG2271">
    <property type="taxonomic scope" value="Bacteria"/>
</dbReference>
<dbReference type="HOGENOM" id="CLU_001265_46_6_6"/>
<dbReference type="InParanoid" id="P76230"/>
<dbReference type="OMA" id="PEPCQRF"/>
<dbReference type="OrthoDB" id="9773957at2"/>
<dbReference type="PhylomeDB" id="P76230"/>
<dbReference type="BioCyc" id="EcoCyc:B1775-MONOMER"/>
<dbReference type="PRO" id="PR:P76230"/>
<dbReference type="Proteomes" id="UP000000625">
    <property type="component" value="Chromosome"/>
</dbReference>
<dbReference type="GO" id="GO:0005886">
    <property type="term" value="C:plasma membrane"/>
    <property type="evidence" value="ECO:0000314"/>
    <property type="project" value="EcoCyc"/>
</dbReference>
<dbReference type="GO" id="GO:0022857">
    <property type="term" value="F:transmembrane transporter activity"/>
    <property type="evidence" value="ECO:0007669"/>
    <property type="project" value="InterPro"/>
</dbReference>
<dbReference type="CDD" id="cd17316">
    <property type="entry name" value="MFS_SV2_like"/>
    <property type="match status" value="1"/>
</dbReference>
<dbReference type="FunFam" id="1.20.1250.20:FF:000209">
    <property type="entry name" value="Transporter, MFS superfamily protein"/>
    <property type="match status" value="1"/>
</dbReference>
<dbReference type="Gene3D" id="1.20.1250.20">
    <property type="entry name" value="MFS general substrate transporter like domains"/>
    <property type="match status" value="1"/>
</dbReference>
<dbReference type="InterPro" id="IPR011701">
    <property type="entry name" value="MFS"/>
</dbReference>
<dbReference type="InterPro" id="IPR020846">
    <property type="entry name" value="MFS_dom"/>
</dbReference>
<dbReference type="InterPro" id="IPR036259">
    <property type="entry name" value="MFS_trans_sf"/>
</dbReference>
<dbReference type="PANTHER" id="PTHR23511">
    <property type="entry name" value="SYNAPTIC VESICLE GLYCOPROTEIN 2"/>
    <property type="match status" value="1"/>
</dbReference>
<dbReference type="PANTHER" id="PTHR23511:SF34">
    <property type="entry name" value="SYNAPTIC VESICLE GLYCOPROTEIN 2"/>
    <property type="match status" value="1"/>
</dbReference>
<dbReference type="Pfam" id="PF07690">
    <property type="entry name" value="MFS_1"/>
    <property type="match status" value="1"/>
</dbReference>
<dbReference type="SUPFAM" id="SSF103473">
    <property type="entry name" value="MFS general substrate transporter"/>
    <property type="match status" value="1"/>
</dbReference>
<dbReference type="PROSITE" id="PS50850">
    <property type="entry name" value="MFS"/>
    <property type="match status" value="1"/>
</dbReference>
<comment type="subcellular location">
    <subcellularLocation>
        <location evidence="2">Cell inner membrane</location>
        <topology evidence="2">Multi-pass membrane protein</topology>
    </subcellularLocation>
</comment>
<comment type="similarity">
    <text evidence="2">Belongs to the major facilitator superfamily. Sugar transporter (TC 2.A.1.1) family.</text>
</comment>
<proteinExistence type="inferred from homology"/>
<feature type="chain" id="PRO_0000050485" description="Putative metabolite transport protein YdjK">
    <location>
        <begin position="1"/>
        <end position="459"/>
    </location>
</feature>
<feature type="topological domain" description="Cytoplasmic" evidence="1">
    <location>
        <begin position="1"/>
        <end position="25"/>
    </location>
</feature>
<feature type="transmembrane region" description="Helical; Name=1" evidence="1">
    <location>
        <begin position="26"/>
        <end position="46"/>
    </location>
</feature>
<feature type="topological domain" description="Periplasmic" evidence="1">
    <location>
        <begin position="47"/>
        <end position="60"/>
    </location>
</feature>
<feature type="transmembrane region" description="Helical; Name=2" evidence="1">
    <location>
        <begin position="61"/>
        <end position="81"/>
    </location>
</feature>
<feature type="topological domain" description="Cytoplasmic" evidence="1">
    <location>
        <begin position="82"/>
        <end position="90"/>
    </location>
</feature>
<feature type="transmembrane region" description="Helical; Name=3" evidence="1">
    <location>
        <begin position="91"/>
        <end position="111"/>
    </location>
</feature>
<feature type="topological domain" description="Periplasmic" evidence="1">
    <location>
        <position position="112"/>
    </location>
</feature>
<feature type="transmembrane region" description="Helical; Name=4" evidence="1">
    <location>
        <begin position="113"/>
        <end position="133"/>
    </location>
</feature>
<feature type="topological domain" description="Cytoplasmic" evidence="1">
    <location>
        <begin position="134"/>
        <end position="153"/>
    </location>
</feature>
<feature type="transmembrane region" description="Helical; Name=5" evidence="1">
    <location>
        <begin position="154"/>
        <end position="174"/>
    </location>
</feature>
<feature type="topological domain" description="Periplasmic" evidence="1">
    <location>
        <begin position="175"/>
        <end position="181"/>
    </location>
</feature>
<feature type="transmembrane region" description="Helical; Name=6" evidence="1">
    <location>
        <begin position="182"/>
        <end position="202"/>
    </location>
</feature>
<feature type="topological domain" description="Cytoplasmic" evidence="1">
    <location>
        <begin position="203"/>
        <end position="271"/>
    </location>
</feature>
<feature type="transmembrane region" description="Helical; Name=7" evidence="1">
    <location>
        <begin position="272"/>
        <end position="292"/>
    </location>
</feature>
<feature type="topological domain" description="Periplasmic" evidence="1">
    <location>
        <begin position="293"/>
        <end position="301"/>
    </location>
</feature>
<feature type="transmembrane region" description="Helical; Name=8" evidence="1">
    <location>
        <begin position="302"/>
        <end position="322"/>
    </location>
</feature>
<feature type="topological domain" description="Cytoplasmic" evidence="1">
    <location>
        <begin position="323"/>
        <end position="329"/>
    </location>
</feature>
<feature type="transmembrane region" description="Helical; Name=9" evidence="1">
    <location>
        <begin position="330"/>
        <end position="350"/>
    </location>
</feature>
<feature type="topological domain" description="Periplasmic" evidence="1">
    <location>
        <position position="351"/>
    </location>
</feature>
<feature type="transmembrane region" description="Helical; Name=10" evidence="1">
    <location>
        <begin position="352"/>
        <end position="372"/>
    </location>
</feature>
<feature type="topological domain" description="Cytoplasmic" evidence="1">
    <location>
        <begin position="373"/>
        <end position="399"/>
    </location>
</feature>
<feature type="transmembrane region" description="Helical; Name=11" evidence="1">
    <location>
        <begin position="400"/>
        <end position="420"/>
    </location>
</feature>
<feature type="transmembrane region" description="Helical; Name=12" evidence="1">
    <location>
        <begin position="421"/>
        <end position="441"/>
    </location>
</feature>
<feature type="topological domain" description="Cytoplasmic" evidence="1">
    <location>
        <begin position="442"/>
        <end position="459"/>
    </location>
</feature>
<evidence type="ECO:0000255" key="1"/>
<evidence type="ECO:0000305" key="2"/>
<organism>
    <name type="scientific">Escherichia coli (strain K12)</name>
    <dbReference type="NCBI Taxonomy" id="83333"/>
    <lineage>
        <taxon>Bacteria</taxon>
        <taxon>Pseudomonadati</taxon>
        <taxon>Pseudomonadota</taxon>
        <taxon>Gammaproteobacteria</taxon>
        <taxon>Enterobacterales</taxon>
        <taxon>Enterobacteriaceae</taxon>
        <taxon>Escherichia</taxon>
    </lineage>
</organism>
<gene>
    <name type="primary">ydjK</name>
    <name type="ordered locus">b1775</name>
    <name type="ordered locus">JW5290</name>
</gene>
<sequence>MEQITKPHCGARLDRLPDCRWHSSMFAIVAFGLLVCWSNAVGGLILAQLKALGWTDNSTTATFSAITTAGMFLGALVGGIIGDKTGRRNAFILYEAIHIASMVVGAFSPNMDFLIACRFVMGVGLGALLVTLFAGFTEYMPGRNRGTWSSRVSFIGNWSYPLCSLIAMGLTPLISAEWNWRVQLLIPAILSLIATALAWRYFPESPRWLESRGRYQEAEKVMRSIEEGVIRQTGKPLPPVVIADDGKAPQAVPYSALLTGVLLKRVILGSCVLIAMNVVQYTLINWLPTIFMTQGINLKDSIVLNTMSMFGAPFGIFIAMLVMDKIPRKTMGVGLLILIAVLGYIYSLQTSMLLITLIGFFLITFVYMYVCYASAVYVPEIWPTEAKLRGSGLANAVGRISGIAAPYAVAVLLSSYGVTGVFILLGAVSIIVAIAIATIGIETKGVSVESLSIDAVANK</sequence>
<keyword id="KW-0997">Cell inner membrane</keyword>
<keyword id="KW-1003">Cell membrane</keyword>
<keyword id="KW-0472">Membrane</keyword>
<keyword id="KW-1185">Reference proteome</keyword>
<keyword id="KW-0812">Transmembrane</keyword>
<keyword id="KW-1133">Transmembrane helix</keyword>
<keyword id="KW-0813">Transport</keyword>
<protein>
    <recommendedName>
        <fullName>Putative metabolite transport protein YdjK</fullName>
    </recommendedName>
</protein>
<name>YDJK_ECOLI</name>
<accession>P76230</accession>
<accession>P76911</accession>